<dbReference type="EMBL" id="AE014295">
    <property type="protein sequence ID" value="AAN25028.1"/>
    <property type="molecule type" value="Genomic_DNA"/>
</dbReference>
<dbReference type="RefSeq" id="NP_696392.1">
    <property type="nucleotide sequence ID" value="NC_004307.2"/>
</dbReference>
<dbReference type="RefSeq" id="WP_007051338.1">
    <property type="nucleotide sequence ID" value="NC_004307.2"/>
</dbReference>
<dbReference type="SMR" id="Q8G4Z7"/>
<dbReference type="STRING" id="206672.BL1221"/>
<dbReference type="EnsemblBacteria" id="AAN25028">
    <property type="protein sequence ID" value="AAN25028"/>
    <property type="gene ID" value="BL1221"/>
</dbReference>
<dbReference type="GeneID" id="69577629"/>
<dbReference type="KEGG" id="blo:BL1221"/>
<dbReference type="PATRIC" id="fig|206672.9.peg.938"/>
<dbReference type="HOGENOM" id="CLU_097408_2_2_11"/>
<dbReference type="OrthoDB" id="9796712at2"/>
<dbReference type="PhylomeDB" id="Q8G4Z7"/>
<dbReference type="Proteomes" id="UP000000439">
    <property type="component" value="Chromosome"/>
</dbReference>
<dbReference type="GO" id="GO:0005829">
    <property type="term" value="C:cytosol"/>
    <property type="evidence" value="ECO:0007669"/>
    <property type="project" value="TreeGrafter"/>
</dbReference>
<dbReference type="GO" id="GO:0005960">
    <property type="term" value="C:glycine cleavage complex"/>
    <property type="evidence" value="ECO:0007669"/>
    <property type="project" value="InterPro"/>
</dbReference>
<dbReference type="GO" id="GO:0019464">
    <property type="term" value="P:glycine decarboxylation via glycine cleavage system"/>
    <property type="evidence" value="ECO:0007669"/>
    <property type="project" value="UniProtKB-UniRule"/>
</dbReference>
<dbReference type="CDD" id="cd06848">
    <property type="entry name" value="GCS_H"/>
    <property type="match status" value="1"/>
</dbReference>
<dbReference type="Gene3D" id="2.40.50.100">
    <property type="match status" value="1"/>
</dbReference>
<dbReference type="HAMAP" id="MF_00272">
    <property type="entry name" value="GcvH"/>
    <property type="match status" value="1"/>
</dbReference>
<dbReference type="InterPro" id="IPR003016">
    <property type="entry name" value="2-oxoA_DH_lipoyl-BS"/>
</dbReference>
<dbReference type="InterPro" id="IPR000089">
    <property type="entry name" value="Biotin_lipoyl"/>
</dbReference>
<dbReference type="InterPro" id="IPR002930">
    <property type="entry name" value="GCV_H"/>
</dbReference>
<dbReference type="InterPro" id="IPR033753">
    <property type="entry name" value="GCV_H/Fam206"/>
</dbReference>
<dbReference type="InterPro" id="IPR017453">
    <property type="entry name" value="GCV_H_sub"/>
</dbReference>
<dbReference type="InterPro" id="IPR011053">
    <property type="entry name" value="Single_hybrid_motif"/>
</dbReference>
<dbReference type="NCBIfam" id="TIGR00527">
    <property type="entry name" value="gcvH"/>
    <property type="match status" value="1"/>
</dbReference>
<dbReference type="NCBIfam" id="NF002270">
    <property type="entry name" value="PRK01202.1"/>
    <property type="match status" value="1"/>
</dbReference>
<dbReference type="PANTHER" id="PTHR11715">
    <property type="entry name" value="GLYCINE CLEAVAGE SYSTEM H PROTEIN"/>
    <property type="match status" value="1"/>
</dbReference>
<dbReference type="PANTHER" id="PTHR11715:SF3">
    <property type="entry name" value="GLYCINE CLEAVAGE SYSTEM H PROTEIN-RELATED"/>
    <property type="match status" value="1"/>
</dbReference>
<dbReference type="Pfam" id="PF01597">
    <property type="entry name" value="GCV_H"/>
    <property type="match status" value="1"/>
</dbReference>
<dbReference type="SUPFAM" id="SSF51230">
    <property type="entry name" value="Single hybrid motif"/>
    <property type="match status" value="1"/>
</dbReference>
<dbReference type="PROSITE" id="PS50968">
    <property type="entry name" value="BIOTINYL_LIPOYL"/>
    <property type="match status" value="1"/>
</dbReference>
<dbReference type="PROSITE" id="PS00189">
    <property type="entry name" value="LIPOYL"/>
    <property type="match status" value="1"/>
</dbReference>
<feature type="chain" id="PRO_0000166207" description="Glycine cleavage system H protein">
    <location>
        <begin position="1"/>
        <end position="137"/>
    </location>
</feature>
<feature type="domain" description="Lipoyl-binding" evidence="2">
    <location>
        <begin position="36"/>
        <end position="118"/>
    </location>
</feature>
<feature type="modified residue" description="N6-lipoyllysine" evidence="1">
    <location>
        <position position="77"/>
    </location>
</feature>
<reference key="1">
    <citation type="journal article" date="2002" name="Proc. Natl. Acad. Sci. U.S.A.">
        <title>The genome sequence of Bifidobacterium longum reflects its adaptation to the human gastrointestinal tract.</title>
        <authorList>
            <person name="Schell M.A."/>
            <person name="Karmirantzou M."/>
            <person name="Snel B."/>
            <person name="Vilanova D."/>
            <person name="Berger B."/>
            <person name="Pessi G."/>
            <person name="Zwahlen M.-C."/>
            <person name="Desiere F."/>
            <person name="Bork P."/>
            <person name="Delley M."/>
            <person name="Pridmore R.D."/>
            <person name="Arigoni F."/>
        </authorList>
    </citation>
    <scope>NUCLEOTIDE SEQUENCE [LARGE SCALE GENOMIC DNA]</scope>
    <source>
        <strain>NCC 2705</strain>
    </source>
</reference>
<organism>
    <name type="scientific">Bifidobacterium longum (strain NCC 2705)</name>
    <dbReference type="NCBI Taxonomy" id="206672"/>
    <lineage>
        <taxon>Bacteria</taxon>
        <taxon>Bacillati</taxon>
        <taxon>Actinomycetota</taxon>
        <taxon>Actinomycetes</taxon>
        <taxon>Bifidobacteriales</taxon>
        <taxon>Bifidobacteriaceae</taxon>
        <taxon>Bifidobacterium</taxon>
    </lineage>
</organism>
<proteinExistence type="inferred from homology"/>
<evidence type="ECO:0000255" key="1">
    <source>
        <dbReference type="HAMAP-Rule" id="MF_00272"/>
    </source>
</evidence>
<evidence type="ECO:0000255" key="2">
    <source>
        <dbReference type="PROSITE-ProRule" id="PRU01066"/>
    </source>
</evidence>
<sequence>MTMSDDNENEQPLNLDIPDHLEYSEEHAWVDRSVDPAIIGITEYAADQLGELVFVDLPEPGARVEAGDEIVELESSKAVQPLISPVAGTVKYVNRDVADDPSVVNGDPYGEGWLLKVELDDDEPELLSADEYAKVVR</sequence>
<keyword id="KW-0450">Lipoyl</keyword>
<keyword id="KW-1185">Reference proteome</keyword>
<accession>Q8G4Z7</accession>
<comment type="function">
    <text evidence="1">The glycine cleavage system catalyzes the degradation of glycine. The H protein shuttles the methylamine group of glycine from the P protein to the T protein.</text>
</comment>
<comment type="cofactor">
    <cofactor evidence="1">
        <name>(R)-lipoate</name>
        <dbReference type="ChEBI" id="CHEBI:83088"/>
    </cofactor>
    <text evidence="1">Binds 1 lipoyl cofactor covalently.</text>
</comment>
<comment type="subunit">
    <text evidence="1">The glycine cleavage system is composed of four proteins: P, T, L and H.</text>
</comment>
<comment type="similarity">
    <text evidence="1">Belongs to the GcvH family.</text>
</comment>
<gene>
    <name evidence="1" type="primary">gcvH</name>
    <name type="ordered locus">BL1221</name>
</gene>
<name>GCSH_BIFLO</name>
<protein>
    <recommendedName>
        <fullName evidence="1">Glycine cleavage system H protein</fullName>
    </recommendedName>
</protein>